<keyword id="KW-1003">Cell membrane</keyword>
<keyword id="KW-0407">Ion channel</keyword>
<keyword id="KW-0406">Ion transport</keyword>
<keyword id="KW-0472">Membrane</keyword>
<keyword id="KW-0479">Metal-binding</keyword>
<keyword id="KW-1185">Reference proteome</keyword>
<keyword id="KW-0915">Sodium</keyword>
<keyword id="KW-0812">Transmembrane</keyword>
<keyword id="KW-1133">Transmembrane helix</keyword>
<keyword id="KW-0813">Transport</keyword>
<proteinExistence type="inferred from homology"/>
<gene>
    <name evidence="1" type="primary">fluC1</name>
    <name evidence="1" type="synonym">crcB1</name>
    <name type="ordered locus">Francci3_2322</name>
</gene>
<name>FLUC1_FRACC</name>
<protein>
    <recommendedName>
        <fullName evidence="1">Fluoride-specific ion channel FluC 1</fullName>
    </recommendedName>
</protein>
<comment type="function">
    <text evidence="1">Fluoride-specific ion channel. Important for reducing fluoride concentration in the cell, thus reducing its toxicity.</text>
</comment>
<comment type="catalytic activity">
    <reaction evidence="1">
        <text>fluoride(in) = fluoride(out)</text>
        <dbReference type="Rhea" id="RHEA:76159"/>
        <dbReference type="ChEBI" id="CHEBI:17051"/>
    </reaction>
    <physiologicalReaction direction="left-to-right" evidence="1">
        <dbReference type="Rhea" id="RHEA:76160"/>
    </physiologicalReaction>
</comment>
<comment type="activity regulation">
    <text evidence="1">Na(+) is not transported, but it plays an essential structural role and its presence is essential for fluoride channel function.</text>
</comment>
<comment type="subcellular location">
    <subcellularLocation>
        <location evidence="1">Cell membrane</location>
        <topology evidence="1">Multi-pass membrane protein</topology>
    </subcellularLocation>
</comment>
<comment type="similarity">
    <text evidence="1">Belongs to the fluoride channel Fluc/FEX (TC 1.A.43) family.</text>
</comment>
<dbReference type="EMBL" id="CP000249">
    <property type="protein sequence ID" value="ABD11690.1"/>
    <property type="molecule type" value="Genomic_DNA"/>
</dbReference>
<dbReference type="RefSeq" id="WP_011436736.1">
    <property type="nucleotide sequence ID" value="NZ_LRTJ01000027.1"/>
</dbReference>
<dbReference type="SMR" id="Q2JAK2"/>
<dbReference type="STRING" id="106370.Francci3_2322"/>
<dbReference type="KEGG" id="fra:Francci3_2322"/>
<dbReference type="eggNOG" id="COG0239">
    <property type="taxonomic scope" value="Bacteria"/>
</dbReference>
<dbReference type="HOGENOM" id="CLU_114342_2_1_11"/>
<dbReference type="OrthoDB" id="5148600at2"/>
<dbReference type="PhylomeDB" id="Q2JAK2"/>
<dbReference type="Proteomes" id="UP000001937">
    <property type="component" value="Chromosome"/>
</dbReference>
<dbReference type="GO" id="GO:0005886">
    <property type="term" value="C:plasma membrane"/>
    <property type="evidence" value="ECO:0007669"/>
    <property type="project" value="UniProtKB-SubCell"/>
</dbReference>
<dbReference type="GO" id="GO:0062054">
    <property type="term" value="F:fluoride channel activity"/>
    <property type="evidence" value="ECO:0007669"/>
    <property type="project" value="UniProtKB-UniRule"/>
</dbReference>
<dbReference type="GO" id="GO:0046872">
    <property type="term" value="F:metal ion binding"/>
    <property type="evidence" value="ECO:0007669"/>
    <property type="project" value="UniProtKB-KW"/>
</dbReference>
<dbReference type="GO" id="GO:0140114">
    <property type="term" value="P:cellular detoxification of fluoride"/>
    <property type="evidence" value="ECO:0007669"/>
    <property type="project" value="UniProtKB-UniRule"/>
</dbReference>
<dbReference type="HAMAP" id="MF_00454">
    <property type="entry name" value="FluC"/>
    <property type="match status" value="1"/>
</dbReference>
<dbReference type="InterPro" id="IPR003691">
    <property type="entry name" value="FluC"/>
</dbReference>
<dbReference type="PANTHER" id="PTHR28259">
    <property type="entry name" value="FLUORIDE EXPORT PROTEIN 1-RELATED"/>
    <property type="match status" value="1"/>
</dbReference>
<dbReference type="PANTHER" id="PTHR28259:SF1">
    <property type="entry name" value="FLUORIDE EXPORT PROTEIN 1-RELATED"/>
    <property type="match status" value="1"/>
</dbReference>
<dbReference type="Pfam" id="PF02537">
    <property type="entry name" value="CRCB"/>
    <property type="match status" value="1"/>
</dbReference>
<reference key="1">
    <citation type="journal article" date="2007" name="Genome Res.">
        <title>Genome characteristics of facultatively symbiotic Frankia sp. strains reflect host range and host plant biogeography.</title>
        <authorList>
            <person name="Normand P."/>
            <person name="Lapierre P."/>
            <person name="Tisa L.S."/>
            <person name="Gogarten J.P."/>
            <person name="Alloisio N."/>
            <person name="Bagnarol E."/>
            <person name="Bassi C.A."/>
            <person name="Berry A.M."/>
            <person name="Bickhart D.M."/>
            <person name="Choisne N."/>
            <person name="Couloux A."/>
            <person name="Cournoyer B."/>
            <person name="Cruveiller S."/>
            <person name="Daubin V."/>
            <person name="Demange N."/>
            <person name="Francino M.P."/>
            <person name="Goltsman E."/>
            <person name="Huang Y."/>
            <person name="Kopp O.R."/>
            <person name="Labarre L."/>
            <person name="Lapidus A."/>
            <person name="Lavire C."/>
            <person name="Marechal J."/>
            <person name="Martinez M."/>
            <person name="Mastronunzio J.E."/>
            <person name="Mullin B.C."/>
            <person name="Niemann J."/>
            <person name="Pujic P."/>
            <person name="Rawnsley T."/>
            <person name="Rouy Z."/>
            <person name="Schenowitz C."/>
            <person name="Sellstedt A."/>
            <person name="Tavares F."/>
            <person name="Tomkins J.P."/>
            <person name="Vallenet D."/>
            <person name="Valverde C."/>
            <person name="Wall L.G."/>
            <person name="Wang Y."/>
            <person name="Medigue C."/>
            <person name="Benson D.R."/>
        </authorList>
    </citation>
    <scope>NUCLEOTIDE SEQUENCE [LARGE SCALE GENOMIC DNA]</scope>
    <source>
        <strain>DSM 45818 / CECT 9043 / HFP020203 / CcI3</strain>
    </source>
</reference>
<evidence type="ECO:0000255" key="1">
    <source>
        <dbReference type="HAMAP-Rule" id="MF_00454"/>
    </source>
</evidence>
<feature type="chain" id="PRO_0000252883" description="Fluoride-specific ion channel FluC 1">
    <location>
        <begin position="1"/>
        <end position="129"/>
    </location>
</feature>
<feature type="transmembrane region" description="Helical" evidence="1">
    <location>
        <begin position="43"/>
        <end position="63"/>
    </location>
</feature>
<feature type="transmembrane region" description="Helical" evidence="1">
    <location>
        <begin position="68"/>
        <end position="88"/>
    </location>
</feature>
<feature type="transmembrane region" description="Helical" evidence="1">
    <location>
        <begin position="100"/>
        <end position="120"/>
    </location>
</feature>
<feature type="binding site" evidence="1">
    <location>
        <position position="78"/>
    </location>
    <ligand>
        <name>Na(+)</name>
        <dbReference type="ChEBI" id="CHEBI:29101"/>
        <note>structural</note>
    </ligand>
</feature>
<feature type="binding site" evidence="1">
    <location>
        <position position="81"/>
    </location>
    <ligand>
        <name>Na(+)</name>
        <dbReference type="ChEBI" id="CHEBI:29101"/>
        <note>structural</note>
    </ligand>
</feature>
<accession>Q2JAK2</accession>
<sequence length="129" mass="12917">MNWLLVIAGAAAGAPLRYLTDRAVQTRHDTVFPWGTFTVNVTASLLLGLVAGAAGAGAPPAWVASEQVVSLVGTGLCGALSTYSTFSYETLRLAEDGARLLAAANVAGSVLAAFGAAALGAALARAVWG</sequence>
<organism>
    <name type="scientific">Frankia casuarinae (strain DSM 45818 / CECT 9043 / HFP020203 / CcI3)</name>
    <dbReference type="NCBI Taxonomy" id="106370"/>
    <lineage>
        <taxon>Bacteria</taxon>
        <taxon>Bacillati</taxon>
        <taxon>Actinomycetota</taxon>
        <taxon>Actinomycetes</taxon>
        <taxon>Frankiales</taxon>
        <taxon>Frankiaceae</taxon>
        <taxon>Frankia</taxon>
    </lineage>
</organism>